<accession>Q8JYK1</accession>
<name>RDRP_FDVS</name>
<proteinExistence type="inferred from homology"/>
<reference key="1">
    <citation type="journal article" date="2003" name="Virus Genes">
        <title>Molecular analysis of Fiji disease Fijivirus genome segments 1 and 3.</title>
        <authorList>
            <person name="McQualter R.B."/>
            <person name="Smith G.R."/>
            <person name="Dale J.L."/>
            <person name="Harding R.M."/>
        </authorList>
    </citation>
    <scope>NUCLEOTIDE SEQUENCE [GENOMIC RNA]</scope>
</reference>
<keyword id="KW-0378">Hydrolase</keyword>
<keyword id="KW-0548">Nucleotidyltransferase</keyword>
<keyword id="KW-1185">Reference proteome</keyword>
<keyword id="KW-0696">RNA-directed RNA polymerase</keyword>
<keyword id="KW-0808">Transferase</keyword>
<keyword id="KW-0693">Viral RNA replication</keyword>
<evidence type="ECO:0000250" key="1"/>
<evidence type="ECO:0000256" key="2">
    <source>
        <dbReference type="SAM" id="MobiDB-lite"/>
    </source>
</evidence>
<dbReference type="EC" id="2.7.7.48"/>
<dbReference type="EMBL" id="AY029520">
    <property type="protein sequence ID" value="AAK40249.1"/>
    <property type="molecule type" value="Genomic_RNA"/>
</dbReference>
<dbReference type="RefSeq" id="YP_249762.1">
    <property type="nucleotide sequence ID" value="NC_007159.1"/>
</dbReference>
<dbReference type="KEGG" id="vg:5075882"/>
<dbReference type="Proteomes" id="UP000001677">
    <property type="component" value="Genome"/>
</dbReference>
<dbReference type="GO" id="GO:0016787">
    <property type="term" value="F:hydrolase activity"/>
    <property type="evidence" value="ECO:0007669"/>
    <property type="project" value="UniProtKB-KW"/>
</dbReference>
<dbReference type="GO" id="GO:0003968">
    <property type="term" value="F:RNA-directed RNA polymerase activity"/>
    <property type="evidence" value="ECO:0007669"/>
    <property type="project" value="UniProtKB-KW"/>
</dbReference>
<dbReference type="Gene3D" id="3.90.1850.10">
    <property type="entry name" value="RNA-directed RNA polymerase lambda-3"/>
    <property type="match status" value="1"/>
</dbReference>
<dbReference type="Pfam" id="PF22212">
    <property type="entry name" value="CPV_RdRP_pol_dom"/>
    <property type="match status" value="1"/>
</dbReference>
<comment type="function">
    <text evidence="1">RNA-directed RNA polymerase that is involved in transcription and genome replication. Following infection, it catalyzes the synthesis of fully conservative plus strands. After core assembly, which consists in recruitment of one capped plus-strand for each genomic segments and polymerase complexes, the polymerase switches mode and catalyzes the synthesis of complementary minus-strands (By similarity).</text>
</comment>
<comment type="catalytic activity">
    <reaction>
        <text>RNA(n) + a ribonucleoside 5'-triphosphate = RNA(n+1) + diphosphate</text>
        <dbReference type="Rhea" id="RHEA:21248"/>
        <dbReference type="Rhea" id="RHEA-COMP:14527"/>
        <dbReference type="Rhea" id="RHEA-COMP:17342"/>
        <dbReference type="ChEBI" id="CHEBI:33019"/>
        <dbReference type="ChEBI" id="CHEBI:61557"/>
        <dbReference type="ChEBI" id="CHEBI:140395"/>
        <dbReference type="EC" id="2.7.7.48"/>
    </reaction>
</comment>
<organismHost>
    <name type="scientific">Saccharum officinarum</name>
    <name type="common">Sugarcane</name>
    <dbReference type="NCBI Taxonomy" id="4547"/>
</organismHost>
<organism>
    <name type="scientific">Fiji disease virus (isolate Sugarcane)</name>
    <name type="common">FDV</name>
    <dbReference type="NCBI Taxonomy" id="648172"/>
    <lineage>
        <taxon>Viruses</taxon>
        <taxon>Riboviria</taxon>
        <taxon>Orthornavirae</taxon>
        <taxon>Duplornaviricota</taxon>
        <taxon>Resentoviricetes</taxon>
        <taxon>Reovirales</taxon>
        <taxon>Spinareoviridae</taxon>
        <taxon>Fijivirus</taxon>
        <taxon>Fiji disease virus</taxon>
    </lineage>
</organism>
<sequence length="1470" mass="170645">MIVRTVCRAKEKCLEKYKNILKYKEQLAKQDQKENETTSNNKDTSSSVPKPSNFRKTKVQNQYNRVFSIDEKVAEYEKILNDKVNMIDAIFNKAEKIRDLFIGTEPLTKELIKNELQYGAIVLNRASDLILAFADNNEPREPEFVLNTDMIVNDLKPLLHPTRIFDYSSFGFDDVNKLAINPKIRYLPNWSINYIRKCIQSFFTSNSNIEVQNLHNYSNHYDNRIYEHAMPNDVKLQILIGLDKMFNKLSIQHRFGTFETQILSCFFMKQKICEYEAYMHLPDCVNKSKKLKKGTETVCWQYLAEIIKHYEGIPFYHHTHSSKFGALDNTKISITTNKEVSCCLPSVMHGLLNGIIGELLCDLSTETALIYAKHLMNCSATSTYQRQLEFKDSFRMWPKLCYDSIGYALAVLYSKDMKPLEHRVEKIDSEFWFDEEEKDKLSSSLSKIPSYMKPFVNNAIQNCKKRGDYINQMICDINKIKLSREPNKFETHDLYLESGKNTEYLRWLTMTSTIISNFGIYNKTSLLLEYEKSISTKTKVMVQQPEPKVSLITEQGLQTPILHDWTKVPVLNEMSSLFDSEWKSTLVKEFEDINDFEKRFVTFLTNKSGGIKSEEPTLSKELKGISNARIIAFALNRNDYQIESKFLNMLIAHGKCAIRFQIDRRARVIVIVPNAIQSSELFLLLGFNVLKSDKRFNEKIAVGKQIGNLLDAKAQMISSGDVLSVKNSSDMKGMDAHTLPNLTLFLRRKMIEVLYELDPTGKCARYFFAEDKEYCLIQHHEKYHEQFVRRLRGPTIHAAKCLYYMFSMNMYLEDNFFSKGMNVSDQTFQSGFFATSAQHTLFLSLYLLNNERKYFSKLDNRMIRLLHSVMGDDVFEVIVNGVKYPNLVKEWLKLRNQGLSKINYEEDVSLSRLFGVFLQQAAILGVYVPYPARMSLFCDERSDTTKRHTLDMIKIVLEVLSSKSQRSYAIDNNISIGYAIWNCHRTSRYLYTDRDKSLIRRLVDHDANLDKLFVIDLSKFENSVRLVYPFVTIMTSPISWPMLYFAHFKIDDPNCTILTYRAKSPTSLNGDGAFLLINQMFFTSDEEHMFKFVEFVKHQDKVVRLKLSSDFLDWKERHTWGFTLGEHLLRFKRLRHLTESRKSELGLGEIEVMVHNLNKYLDSHRVQMSLDSFDQLRKNKITVPSSLMYVNHNRAKIEQSLTVRTETLDERASLDSTFLRHVFSYSIVPKDIEVLKTHALCAIKVRTYSDLKYALSVDGYLPESDDSSFNVILPFLPGYHQSSSYGRLFRYTTLPTVHDRDISGTMGEIVGGLGASFDIDSAIEFGAYVYNINRNLINAAASAIGIPQKFVSKYEQLVQAFIMNNFNLKYHSIFHNAKYFGLSGSLKKFSEYGGYSNKLIRFDTINKMEKFHNAFTRDLVFAYIDELNGRRVYLDYSIHSLLLIMSRGSIKYFTTHLYKLFNPLLSLELD</sequence>
<gene>
    <name type="primary">S1</name>
</gene>
<feature type="chain" id="PRO_0000403405" description="RNA-directed RNA polymerase VP1">
    <location>
        <begin position="1"/>
        <end position="1470"/>
    </location>
</feature>
<feature type="region of interest" description="Disordered" evidence="2">
    <location>
        <begin position="28"/>
        <end position="55"/>
    </location>
</feature>
<feature type="compositionally biased region" description="Polar residues" evidence="2">
    <location>
        <begin position="37"/>
        <end position="50"/>
    </location>
</feature>
<protein>
    <recommendedName>
        <fullName>RNA-directed RNA polymerase VP1</fullName>
        <ecNumber>2.7.7.48</ecNumber>
    </recommendedName>
</protein>